<dbReference type="EC" id="2.1.1.-"/>
<dbReference type="EMBL" id="LT708304">
    <property type="protein sequence ID" value="SIT98586.1"/>
    <property type="status" value="ALT_INIT"/>
    <property type="molecule type" value="Genomic_DNA"/>
</dbReference>
<dbReference type="SMR" id="Q7U2R3"/>
<dbReference type="PATRIC" id="fig|233413.5.peg.171"/>
<dbReference type="Proteomes" id="UP000001419">
    <property type="component" value="Chromosome"/>
</dbReference>
<dbReference type="GO" id="GO:0008168">
    <property type="term" value="F:methyltransferase activity"/>
    <property type="evidence" value="ECO:0007669"/>
    <property type="project" value="UniProtKB-KW"/>
</dbReference>
<dbReference type="GO" id="GO:0032259">
    <property type="term" value="P:methylation"/>
    <property type="evidence" value="ECO:0007669"/>
    <property type="project" value="UniProtKB-KW"/>
</dbReference>
<dbReference type="Gene3D" id="3.40.50.150">
    <property type="entry name" value="Vaccinia Virus protein VP39"/>
    <property type="match status" value="1"/>
</dbReference>
<dbReference type="InterPro" id="IPR007213">
    <property type="entry name" value="Ppm1/Ppm2/Tcmp"/>
</dbReference>
<dbReference type="InterPro" id="IPR029063">
    <property type="entry name" value="SAM-dependent_MTases_sf"/>
</dbReference>
<dbReference type="InterPro" id="IPR011610">
    <property type="entry name" value="SAM_mthyl_Trfase_ML2640-like"/>
</dbReference>
<dbReference type="NCBIfam" id="TIGR00027">
    <property type="entry name" value="mthyl_TIGR00027"/>
    <property type="match status" value="1"/>
</dbReference>
<dbReference type="PANTHER" id="PTHR43619">
    <property type="entry name" value="S-ADENOSYL-L-METHIONINE-DEPENDENT METHYLTRANSFERASE YKTD-RELATED"/>
    <property type="match status" value="1"/>
</dbReference>
<dbReference type="PANTHER" id="PTHR43619:SF2">
    <property type="entry name" value="S-ADENOSYL-L-METHIONINE-DEPENDENT METHYLTRANSFERASES SUPERFAMILY PROTEIN"/>
    <property type="match status" value="1"/>
</dbReference>
<dbReference type="Pfam" id="PF04072">
    <property type="entry name" value="LCM"/>
    <property type="match status" value="1"/>
</dbReference>
<dbReference type="SUPFAM" id="SSF53335">
    <property type="entry name" value="S-adenosyl-L-methionine-dependent methyltransferases"/>
    <property type="match status" value="1"/>
</dbReference>
<accession>Q7U2R3</accession>
<accession>A0A1R3XUM9</accession>
<accession>X2BE73</accession>
<reference key="1">
    <citation type="journal article" date="2003" name="Proc. Natl. Acad. Sci. U.S.A.">
        <title>The complete genome sequence of Mycobacterium bovis.</title>
        <authorList>
            <person name="Garnier T."/>
            <person name="Eiglmeier K."/>
            <person name="Camus J.-C."/>
            <person name="Medina N."/>
            <person name="Mansoor H."/>
            <person name="Pryor M."/>
            <person name="Duthoy S."/>
            <person name="Grondin S."/>
            <person name="Lacroix C."/>
            <person name="Monsempe C."/>
            <person name="Simon S."/>
            <person name="Harris B."/>
            <person name="Atkin R."/>
            <person name="Doggett J."/>
            <person name="Mayes R."/>
            <person name="Keating L."/>
            <person name="Wheeler P.R."/>
            <person name="Parkhill J."/>
            <person name="Barrell B.G."/>
            <person name="Cole S.T."/>
            <person name="Gordon S.V."/>
            <person name="Hewinson R.G."/>
        </authorList>
    </citation>
    <scope>NUCLEOTIDE SEQUENCE [LARGE SCALE GENOMIC DNA]</scope>
    <source>
        <strain>ATCC BAA-935 / AF2122/97</strain>
    </source>
</reference>
<reference key="2">
    <citation type="journal article" date="2017" name="Genome Announc.">
        <title>Updated reference genome sequence and annotation of Mycobacterium bovis AF2122/97.</title>
        <authorList>
            <person name="Malone K.M."/>
            <person name="Farrell D."/>
            <person name="Stuber T.P."/>
            <person name="Schubert O.T."/>
            <person name="Aebersold R."/>
            <person name="Robbe-Austerman S."/>
            <person name="Gordon S.V."/>
        </authorList>
    </citation>
    <scope>NUCLEOTIDE SEQUENCE [LARGE SCALE GENOMIC DNA]</scope>
    <scope>GENOME REANNOTATION</scope>
    <source>
        <strain>ATCC BAA-935 / AF2122/97</strain>
    </source>
</reference>
<name>Y150_MYCBO</name>
<feature type="chain" id="PRO_0000361130" description="Putative S-adenosyl-L-methionine-dependent methyltransferase Mb0150">
    <location>
        <begin position="1"/>
        <end position="311"/>
    </location>
</feature>
<feature type="binding site" evidence="1">
    <location>
        <position position="135"/>
    </location>
    <ligand>
        <name>S-adenosyl-L-methionine</name>
        <dbReference type="ChEBI" id="CHEBI:59789"/>
    </ligand>
</feature>
<feature type="binding site" evidence="1">
    <location>
        <begin position="164"/>
        <end position="165"/>
    </location>
    <ligand>
        <name>S-adenosyl-L-methionine</name>
        <dbReference type="ChEBI" id="CHEBI:59789"/>
    </ligand>
</feature>
<gene>
    <name type="ordered locus">BQ2027_MB0150</name>
</gene>
<evidence type="ECO:0000250" key="1"/>
<evidence type="ECO:0000305" key="2"/>
<sequence length="311" mass="33709">MSSLPSSRRTAGDTWAITESVGATALGVAAARAVETAATNPLIRDEFAKVLVSSAGTAWARLADADLAWLDGDQLGRRVHRVACDYQAVRTHFFDEYFGAAVDAGVRQVVILAAGLDARAYRLNWPAGTVVYEIDQPSVLEYKAGILQSHGAVPTARRHAVAVDLRDDWPAALIAAGFDGTQPTAWLAEGLLPYLPGDAADRLFDMVTALSAPGSQVAVEAFTMNTKGNTQRWNRMRERLGLDIDVQALTYHEPDRSDAAQWLATHGWQVHSVSNREEMARLGRAIPQDLVDETVRTTLLRGRLVTPAQPA</sequence>
<organism>
    <name type="scientific">Mycobacterium bovis (strain ATCC BAA-935 / AF2122/97)</name>
    <dbReference type="NCBI Taxonomy" id="233413"/>
    <lineage>
        <taxon>Bacteria</taxon>
        <taxon>Bacillati</taxon>
        <taxon>Actinomycetota</taxon>
        <taxon>Actinomycetes</taxon>
        <taxon>Mycobacteriales</taxon>
        <taxon>Mycobacteriaceae</taxon>
        <taxon>Mycobacterium</taxon>
        <taxon>Mycobacterium tuberculosis complex</taxon>
    </lineage>
</organism>
<proteinExistence type="inferred from homology"/>
<comment type="function">
    <text evidence="1">Exhibits S-adenosyl-L-methionine-dependent methyltransferase activity.</text>
</comment>
<comment type="similarity">
    <text evidence="2">Belongs to the UPF0677 family.</text>
</comment>
<comment type="sequence caution" evidence="2">
    <conflict type="erroneous initiation">
        <sequence resource="EMBL-CDS" id="SIT98586"/>
    </conflict>
    <text>Extended N-terminus.</text>
</comment>
<protein>
    <recommendedName>
        <fullName>Putative S-adenosyl-L-methionine-dependent methyltransferase Mb0150</fullName>
        <ecNumber>2.1.1.-</ecNumber>
    </recommendedName>
</protein>
<keyword id="KW-0489">Methyltransferase</keyword>
<keyword id="KW-1185">Reference proteome</keyword>
<keyword id="KW-0949">S-adenosyl-L-methionine</keyword>
<keyword id="KW-0808">Transferase</keyword>